<keyword id="KW-0002">3D-structure</keyword>
<keyword id="KW-0414">Isoprene biosynthesis</keyword>
<keyword id="KW-0456">Lyase</keyword>
<keyword id="KW-0479">Metal-binding</keyword>
<keyword id="KW-1185">Reference proteome</keyword>
<comment type="function">
    <text evidence="1 2">Involved in the biosynthesis of isopentenyl diphosphate (IPP) and dimethylallyl diphosphate (DMAPP), two major building blocks of isoprenoid compounds. Catalyzes the conversion of 4-diphosphocytidyl-2-C-methyl-D-erythritol 2-phosphate (CDP-ME2P) to 2-C-methyl-D-erythritol 2,4-cyclodiphosphate (ME-CPP) with a corresponding release of cytidine 5-monophosphate (CMP).</text>
</comment>
<comment type="catalytic activity">
    <reaction evidence="1 2">
        <text>4-CDP-2-C-methyl-D-erythritol 2-phosphate = 2-C-methyl-D-erythritol 2,4-cyclic diphosphate + CMP</text>
        <dbReference type="Rhea" id="RHEA:23864"/>
        <dbReference type="ChEBI" id="CHEBI:57919"/>
        <dbReference type="ChEBI" id="CHEBI:58483"/>
        <dbReference type="ChEBI" id="CHEBI:60377"/>
        <dbReference type="EC" id="4.6.1.12"/>
    </reaction>
</comment>
<comment type="cofactor">
    <cofactor evidence="1 2">
        <name>a divalent metal cation</name>
        <dbReference type="ChEBI" id="CHEBI:60240"/>
    </cofactor>
    <text evidence="1 2">Binds 1 divalent metal cation per subunit.</text>
</comment>
<comment type="biophysicochemical properties">
    <temperatureDependence>
        <text evidence="2">Thermostable.</text>
    </temperatureDependence>
</comment>
<comment type="pathway">
    <text evidence="1">Isoprenoid biosynthesis; isopentenyl diphosphate biosynthesis via DXP pathway; isopentenyl diphosphate from 1-deoxy-D-xylulose 5-phosphate: step 4/6.</text>
</comment>
<comment type="subunit">
    <text evidence="1 2">Homotrimer.</text>
</comment>
<comment type="similarity">
    <text evidence="1 3">Belongs to the IspF family.</text>
</comment>
<proteinExistence type="evidence at protein level"/>
<organism>
    <name type="scientific">Thermus thermophilus (strain ATCC 27634 / DSM 579 / HB8)</name>
    <dbReference type="NCBI Taxonomy" id="300852"/>
    <lineage>
        <taxon>Bacteria</taxon>
        <taxon>Thermotogati</taxon>
        <taxon>Deinococcota</taxon>
        <taxon>Deinococci</taxon>
        <taxon>Thermales</taxon>
        <taxon>Thermaceae</taxon>
        <taxon>Thermus</taxon>
    </lineage>
</organism>
<protein>
    <recommendedName>
        <fullName evidence="1">2-C-methyl-D-erythritol 2,4-cyclodiphosphate synthase</fullName>
        <shortName evidence="1">MECDP-synthase</shortName>
        <shortName evidence="1">MECPP-synthase</shortName>
        <shortName evidence="1">MECPS</shortName>
        <ecNumber evidence="1">4.6.1.12</ecNumber>
    </recommendedName>
</protein>
<evidence type="ECO:0000255" key="1">
    <source>
        <dbReference type="HAMAP-Rule" id="MF_00107"/>
    </source>
</evidence>
<evidence type="ECO:0000269" key="2">
    <source>
    </source>
</evidence>
<evidence type="ECO:0000305" key="3"/>
<evidence type="ECO:0007829" key="4">
    <source>
        <dbReference type="PDB" id="1IV3"/>
    </source>
</evidence>
<accession>Q8RQP5</accession>
<accession>Q5SHE0</accession>
<dbReference type="EC" id="4.6.1.12" evidence="1"/>
<dbReference type="EMBL" id="AB082126">
    <property type="protein sequence ID" value="BAB86885.1"/>
    <property type="molecule type" value="Genomic_DNA"/>
</dbReference>
<dbReference type="EMBL" id="AP008226">
    <property type="protein sequence ID" value="BAD71613.1"/>
    <property type="molecule type" value="Genomic_DNA"/>
</dbReference>
<dbReference type="RefSeq" id="WP_011228919.1">
    <property type="nucleotide sequence ID" value="NC_006461.1"/>
</dbReference>
<dbReference type="RefSeq" id="YP_145056.1">
    <property type="nucleotide sequence ID" value="NC_006461.1"/>
</dbReference>
<dbReference type="PDB" id="1IV1">
    <property type="method" value="X-ray"/>
    <property type="resolution" value="1.65 A"/>
    <property type="chains" value="A/B/C/D/E/F=1-152"/>
</dbReference>
<dbReference type="PDB" id="1IV2">
    <property type="method" value="X-ray"/>
    <property type="resolution" value="1.55 A"/>
    <property type="chains" value="A/B/C/D/E/F=1-152"/>
</dbReference>
<dbReference type="PDB" id="1IV3">
    <property type="method" value="X-ray"/>
    <property type="resolution" value="1.52 A"/>
    <property type="chains" value="A/B/C/D/E/F=1-152"/>
</dbReference>
<dbReference type="PDB" id="1IV4">
    <property type="method" value="X-ray"/>
    <property type="resolution" value="1.55 A"/>
    <property type="chains" value="A/B/C/D/E/F=1-152"/>
</dbReference>
<dbReference type="PDBsum" id="1IV1"/>
<dbReference type="PDBsum" id="1IV2"/>
<dbReference type="PDBsum" id="1IV3"/>
<dbReference type="PDBsum" id="1IV4"/>
<dbReference type="SMR" id="Q8RQP5"/>
<dbReference type="DrugBank" id="DB04555">
    <property type="generic name" value="Cytidine-5'-Diphosphate"/>
</dbReference>
<dbReference type="DrugBank" id="DB03403">
    <property type="generic name" value="Cytidine-5'-Monophosphate"/>
</dbReference>
<dbReference type="EnsemblBacteria" id="BAD71613">
    <property type="protein sequence ID" value="BAD71613"/>
    <property type="gene ID" value="BAD71613"/>
</dbReference>
<dbReference type="GeneID" id="3169480"/>
<dbReference type="KEGG" id="ttj:TTHA1790"/>
<dbReference type="PATRIC" id="fig|300852.9.peg.1761"/>
<dbReference type="eggNOG" id="COG0245">
    <property type="taxonomic scope" value="Bacteria"/>
</dbReference>
<dbReference type="HOGENOM" id="CLU_084630_2_1_0"/>
<dbReference type="PhylomeDB" id="Q8RQP5"/>
<dbReference type="BRENDA" id="4.6.1.12">
    <property type="organism ID" value="2305"/>
</dbReference>
<dbReference type="UniPathway" id="UPA00056">
    <property type="reaction ID" value="UER00095"/>
</dbReference>
<dbReference type="EvolutionaryTrace" id="Q8RQP5"/>
<dbReference type="Proteomes" id="UP000000532">
    <property type="component" value="Chromosome"/>
</dbReference>
<dbReference type="GO" id="GO:0008685">
    <property type="term" value="F:2-C-methyl-D-erythritol 2,4-cyclodiphosphate synthase activity"/>
    <property type="evidence" value="ECO:0007669"/>
    <property type="project" value="UniProtKB-UniRule"/>
</dbReference>
<dbReference type="GO" id="GO:0046872">
    <property type="term" value="F:metal ion binding"/>
    <property type="evidence" value="ECO:0007669"/>
    <property type="project" value="UniProtKB-KW"/>
</dbReference>
<dbReference type="GO" id="GO:0019288">
    <property type="term" value="P:isopentenyl diphosphate biosynthetic process, methylerythritol 4-phosphate pathway"/>
    <property type="evidence" value="ECO:0007669"/>
    <property type="project" value="UniProtKB-UniRule"/>
</dbReference>
<dbReference type="GO" id="GO:0016114">
    <property type="term" value="P:terpenoid biosynthetic process"/>
    <property type="evidence" value="ECO:0007669"/>
    <property type="project" value="InterPro"/>
</dbReference>
<dbReference type="CDD" id="cd00554">
    <property type="entry name" value="MECDP_synthase"/>
    <property type="match status" value="1"/>
</dbReference>
<dbReference type="Gene3D" id="3.30.1330.50">
    <property type="entry name" value="2-C-methyl-D-erythritol 2,4-cyclodiphosphate synthase"/>
    <property type="match status" value="1"/>
</dbReference>
<dbReference type="HAMAP" id="MF_00107">
    <property type="entry name" value="IspF"/>
    <property type="match status" value="1"/>
</dbReference>
<dbReference type="InterPro" id="IPR003526">
    <property type="entry name" value="MECDP_synthase"/>
</dbReference>
<dbReference type="InterPro" id="IPR020555">
    <property type="entry name" value="MECDP_synthase_CS"/>
</dbReference>
<dbReference type="InterPro" id="IPR036571">
    <property type="entry name" value="MECDP_synthase_sf"/>
</dbReference>
<dbReference type="NCBIfam" id="TIGR00151">
    <property type="entry name" value="ispF"/>
    <property type="match status" value="1"/>
</dbReference>
<dbReference type="PANTHER" id="PTHR43181">
    <property type="entry name" value="2-C-METHYL-D-ERYTHRITOL 2,4-CYCLODIPHOSPHATE SYNTHASE, CHLOROPLASTIC"/>
    <property type="match status" value="1"/>
</dbReference>
<dbReference type="PANTHER" id="PTHR43181:SF1">
    <property type="entry name" value="2-C-METHYL-D-ERYTHRITOL 2,4-CYCLODIPHOSPHATE SYNTHASE, CHLOROPLASTIC"/>
    <property type="match status" value="1"/>
</dbReference>
<dbReference type="Pfam" id="PF02542">
    <property type="entry name" value="YgbB"/>
    <property type="match status" value="1"/>
</dbReference>
<dbReference type="SUPFAM" id="SSF69765">
    <property type="entry name" value="IpsF-like"/>
    <property type="match status" value="1"/>
</dbReference>
<dbReference type="PROSITE" id="PS01350">
    <property type="entry name" value="ISPF"/>
    <property type="match status" value="1"/>
</dbReference>
<name>ISPF_THET8</name>
<reference key="1">
    <citation type="submission" date="2002-03" db="EMBL/GenBank/DDBJ databases">
        <title>2-C-methyl-D-erythritol 2,4-cyclodiphosphate synthase from Thermus thermophilus HB8.</title>
        <authorList>
            <person name="Kishida H."/>
            <person name="Wada T."/>
            <person name="Unzai S."/>
            <person name="Kuzuyama T."/>
            <person name="Terada T."/>
            <person name="Shirouzu M."/>
            <person name="Yokoyama S."/>
            <person name="Tame J.R.H."/>
            <person name="Park S.-Y."/>
        </authorList>
    </citation>
    <scope>NUCLEOTIDE SEQUENCE [GENOMIC DNA]</scope>
</reference>
<reference key="2">
    <citation type="submission" date="2004-11" db="EMBL/GenBank/DDBJ databases">
        <title>Complete genome sequence of Thermus thermophilus HB8.</title>
        <authorList>
            <person name="Masui R."/>
            <person name="Kurokawa K."/>
            <person name="Nakagawa N."/>
            <person name="Tokunaga F."/>
            <person name="Koyama Y."/>
            <person name="Shibata T."/>
            <person name="Oshima T."/>
            <person name="Yokoyama S."/>
            <person name="Yasunaga T."/>
            <person name="Kuramitsu S."/>
        </authorList>
    </citation>
    <scope>NUCLEOTIDE SEQUENCE [LARGE SCALE GENOMIC DNA]</scope>
    <source>
        <strain>ATCC 27634 / DSM 579 / HB8</strain>
    </source>
</reference>
<reference key="3">
    <citation type="journal article" date="2003" name="Acta Crystallogr. D">
        <title>Structure and catalytic mechanism of 2-C-methyl-D-erythritol 2,4-cyclodiphosphate (MECDP) synthase, an enzyme in the non-mevalonate pathway of isoprenoid synthesis.</title>
        <authorList>
            <person name="Kishida H."/>
            <person name="Wada T."/>
            <person name="Unzai S."/>
            <person name="Kuzuyama T."/>
            <person name="Takagi M."/>
            <person name="Terada T."/>
            <person name="Shirouzu M."/>
            <person name="Yokoyama S."/>
            <person name="Tame J.R.H."/>
            <person name="Park S.-Y."/>
        </authorList>
    </citation>
    <scope>X-RAY CRYSTALLOGRAPHY (1.52 ANGSTROMS) IN COMPLEX WITH SUBSTRATE ANALOGS AND MAGNESIUM IONS</scope>
    <scope>FUNCTION AS A MECDP-SYNTHASE</scope>
    <scope>CATALYTIC ACTIVITY</scope>
    <scope>BIOPHYSICOCHEMICAL PROPERTIES</scope>
    <scope>COFACTOR</scope>
    <scope>SUBUNIT</scope>
</reference>
<sequence>MRIGYGEDSHRLEEGRPLYLCGLLIPSPVGALAHSDGDAALHALTDALLSAYGLGDIGLLFPDTDPRWRGERSEVFLREALRLVEARGAKLLQASLVLTLDRPKLGPHRKALVDSLSRLLRLPQDRIGLTFKTSEGLAPSHVQARAVVLLDG</sequence>
<gene>
    <name evidence="1" type="primary">ispF</name>
    <name type="ordered locus">TTHA1790</name>
</gene>
<feature type="chain" id="PRO_0000189511" description="2-C-methyl-D-erythritol 2,4-cyclodiphosphate synthase">
    <location>
        <begin position="1"/>
        <end position="152"/>
    </location>
</feature>
<feature type="binding site" evidence="1">
    <location>
        <begin position="8"/>
        <end position="10"/>
    </location>
    <ligand>
        <name>4-CDP-2-C-methyl-D-erythritol 2-phosphate</name>
        <dbReference type="ChEBI" id="CHEBI:57919"/>
    </ligand>
</feature>
<feature type="binding site" evidence="1">
    <location>
        <position position="8"/>
    </location>
    <ligand>
        <name>a divalent metal cation</name>
        <dbReference type="ChEBI" id="CHEBI:60240"/>
    </ligand>
</feature>
<feature type="binding site" evidence="1">
    <location>
        <position position="10"/>
    </location>
    <ligand>
        <name>a divalent metal cation</name>
        <dbReference type="ChEBI" id="CHEBI:60240"/>
    </ligand>
</feature>
<feature type="binding site" evidence="1">
    <location>
        <begin position="34"/>
        <end position="35"/>
    </location>
    <ligand>
        <name>4-CDP-2-C-methyl-D-erythritol 2-phosphate</name>
        <dbReference type="ChEBI" id="CHEBI:57919"/>
    </ligand>
</feature>
<feature type="binding site" evidence="1">
    <location>
        <position position="42"/>
    </location>
    <ligand>
        <name>a divalent metal cation</name>
        <dbReference type="ChEBI" id="CHEBI:60240"/>
    </ligand>
</feature>
<feature type="binding site" evidence="1">
    <location>
        <begin position="56"/>
        <end position="58"/>
    </location>
    <ligand>
        <name>4-CDP-2-C-methyl-D-erythritol 2-phosphate</name>
        <dbReference type="ChEBI" id="CHEBI:57919"/>
    </ligand>
</feature>
<feature type="binding site" evidence="1">
    <location>
        <begin position="61"/>
        <end position="65"/>
    </location>
    <ligand>
        <name>4-CDP-2-C-methyl-D-erythritol 2-phosphate</name>
        <dbReference type="ChEBI" id="CHEBI:57919"/>
    </ligand>
</feature>
<feature type="binding site">
    <location>
        <begin position="100"/>
        <end position="106"/>
    </location>
    <ligand>
        <name>4-CDP-2-C-methyl-D-erythritol 2-phosphate</name>
        <dbReference type="ChEBI" id="CHEBI:57919"/>
    </ligand>
</feature>
<feature type="binding site">
    <location>
        <begin position="131"/>
        <end position="135"/>
    </location>
    <ligand>
        <name>4-CDP-2-C-methyl-D-erythritol 2-phosphate</name>
        <dbReference type="ChEBI" id="CHEBI:57919"/>
    </ligand>
</feature>
<feature type="site" description="Transition state stabilizer" evidence="1">
    <location>
        <position position="34"/>
    </location>
</feature>
<feature type="site" description="Transition state stabilizer" evidence="1">
    <location>
        <position position="133"/>
    </location>
</feature>
<feature type="strand" evidence="4">
    <location>
        <begin position="3"/>
        <end position="14"/>
    </location>
</feature>
<feature type="strand" evidence="4">
    <location>
        <begin position="18"/>
        <end position="20"/>
    </location>
</feature>
<feature type="strand" evidence="4">
    <location>
        <begin position="23"/>
        <end position="25"/>
    </location>
</feature>
<feature type="strand" evidence="4">
    <location>
        <begin position="28"/>
        <end position="31"/>
    </location>
</feature>
<feature type="strand" evidence="4">
    <location>
        <begin position="33"/>
        <end position="35"/>
    </location>
</feature>
<feature type="helix" evidence="4">
    <location>
        <begin position="39"/>
        <end position="50"/>
    </location>
</feature>
<feature type="turn" evidence="4">
    <location>
        <begin position="51"/>
        <end position="53"/>
    </location>
</feature>
<feature type="helix" evidence="4">
    <location>
        <begin position="57"/>
        <end position="60"/>
    </location>
</feature>
<feature type="turn" evidence="4">
    <location>
        <begin position="66"/>
        <end position="70"/>
    </location>
</feature>
<feature type="helix" evidence="4">
    <location>
        <begin position="73"/>
        <end position="86"/>
    </location>
</feature>
<feature type="strand" evidence="4">
    <location>
        <begin position="91"/>
        <end position="99"/>
    </location>
</feature>
<feature type="strand" evidence="4">
    <location>
        <begin position="101"/>
        <end position="103"/>
    </location>
</feature>
<feature type="helix" evidence="4">
    <location>
        <begin position="106"/>
        <end position="108"/>
    </location>
</feature>
<feature type="helix" evidence="4">
    <location>
        <begin position="109"/>
        <end position="120"/>
    </location>
</feature>
<feature type="helix" evidence="4">
    <location>
        <begin position="124"/>
        <end position="126"/>
    </location>
</feature>
<feature type="strand" evidence="4">
    <location>
        <begin position="127"/>
        <end position="132"/>
    </location>
</feature>
<feature type="strand" evidence="4">
    <location>
        <begin position="141"/>
        <end position="150"/>
    </location>
</feature>